<sequence>MIMFPLFGKISLGILIFVLIEGDFPSLTAQTYLSIEEIQEPKSAVSFLLPEESTDLSLATKKKQPLDRRETERQWLIRRRRSILFPNGVKICPDESVAEAVANHVKYFKVRVCQEAVWEAFRTFWDRLPGREEYHYWMNLCEDGVTSIFEMGTNFSESVEHRSLIMKKLTYAKETVSSSELSSPVPVGDTSTLGDTTLSVPHPEVDAYEGASESSLERPEESISNEIENVIEEATKPAGEQIAEFSIHLLGKQYREELQDSSSFHHQHLEEEFISEVENAFTGLPGYKEIRVLEFRSPKENDSGVDVYYAVTFNGEAISNTTWDLISLHSNKVENHGLVELDDKPTVVYTISNFRDYIAETLQQNFLLGNSSLNPDPDSLQLINVRGVLRHQTEDLVWNTQSSSLQATPSSILDNTFQAAWPSADESITSSIPPLDFSSGPPSATGRELWSESPLGDLVSTHKLAFPSKMGLSSSPEVLEVSSLTLHSVTPAVLQTGLPVASEERTSGSHLVEDGLANVEESEDFLSIDSLPSSSFTQPVPKETIPSMEDSDVSLTSSPYLTSSIPFGLDSLTSKVKDQLKVSPFLPDASMEKELIFDGGLGSGSGQKVDLITWPWSETSSEKSAEPLSKPWLEDDDSLLPAEIEDKKLVLVDKMDSTDQISKHSKYEHDDRSTHFPEEEPLSGPAVPIFADTAAESASLTLPKHISEVPGVDDYSVTKAPLILTSVAISASTDKSDQADAILREDMEQITESSNYEWFDSEVSMVKPDMQTLWTILPESERVWTRTSSLEKLSRDILASTPQSADRLWLSVTQSTKLPPTTISTLLEDEVIMGVQDISLELDRIGTDYYQPEQVQEQNGKVGSYVEMSTSVHSTEMVSVAWPTEGGDDLSYTQTSGALVVFFSLRVTNMMFSEDLFNKNSLEYKALEQRFLELLVPYLQSNLTGFQNLEILNFRNGSIVVNSRMKFANSVPPNVNNAVYMILEDFCTTAYNTMNLAIDKYSLDVESGDEANPCKFQACNEFSECLVNPWSGEAKCRCFPGYLSVEERPCQSLCDLQPDFCLNDGKCDIMPGHGAICRCRVGENWWYRGKHCEEFVSEPVIIGITIASVVGLLVIFSAIIYFFIRTLQAHHDRSERESPFSGSSRQPDSLSSIENAVKYNPVYESHRAGCEKYEGPYPQHPFYSSASGDVIGGLSREEIRQMYESSELSREEIQERMRVLELYANDPEFAAFVREQQVEEV</sequence>
<evidence type="ECO:0000250" key="1"/>
<evidence type="ECO:0000250" key="2">
    <source>
        <dbReference type="UniProtKB" id="Q80XH2"/>
    </source>
</evidence>
<evidence type="ECO:0000255" key="3"/>
<evidence type="ECO:0000255" key="4">
    <source>
        <dbReference type="PROSITE-ProRule" id="PRU00076"/>
    </source>
</evidence>
<evidence type="ECO:0000255" key="5">
    <source>
        <dbReference type="PROSITE-ProRule" id="PRU00188"/>
    </source>
</evidence>
<evidence type="ECO:0000256" key="6">
    <source>
        <dbReference type="SAM" id="MobiDB-lite"/>
    </source>
</evidence>
<evidence type="ECO:0000269" key="7">
    <source>
    </source>
</evidence>
<evidence type="ECO:0000269" key="8">
    <source>
    </source>
</evidence>
<evidence type="ECO:0000269" key="9">
    <source>
    </source>
</evidence>
<evidence type="ECO:0000269" key="10">
    <source>
    </source>
</evidence>
<evidence type="ECO:0000269" key="11">
    <source>
    </source>
</evidence>
<evidence type="ECO:0000269" key="12">
    <source>
    </source>
</evidence>
<evidence type="ECO:0000269" key="13">
    <source>
    </source>
</evidence>
<evidence type="ECO:0000269" key="14">
    <source>
    </source>
</evidence>
<evidence type="ECO:0000305" key="15"/>
<gene>
    <name type="primary">IMPG2</name>
    <name type="synonym">IPM200</name>
</gene>
<name>IMPG2_HUMAN</name>
<keyword id="KW-0966">Cell projection</keyword>
<keyword id="KW-0903">Direct protein sequencing</keyword>
<keyword id="KW-0225">Disease variant</keyword>
<keyword id="KW-1015">Disulfide bond</keyword>
<keyword id="KW-0245">EGF-like domain</keyword>
<keyword id="KW-0272">Extracellular matrix</keyword>
<keyword id="KW-0325">Glycoprotein</keyword>
<keyword id="KW-0358">Heparin-binding</keyword>
<keyword id="KW-0472">Membrane</keyword>
<keyword id="KW-1267">Proteomics identification</keyword>
<keyword id="KW-0675">Receptor</keyword>
<keyword id="KW-1185">Reference proteome</keyword>
<keyword id="KW-0677">Repeat</keyword>
<keyword id="KW-0682">Retinitis pigmentosa</keyword>
<keyword id="KW-0964">Secreted</keyword>
<keyword id="KW-0732">Signal</keyword>
<keyword id="KW-0812">Transmembrane</keyword>
<keyword id="KW-1133">Transmembrane helix</keyword>
<protein>
    <recommendedName>
        <fullName>Interphotoreceptor matrix proteoglycan 2</fullName>
    </recommendedName>
    <alternativeName>
        <fullName>Interphotoreceptor matrix proteoglycan of 200 kDa</fullName>
        <shortName>IPM 200</shortName>
    </alternativeName>
    <alternativeName>
        <fullName>Sialoprotein associated with cones and rods proteoglycan</fullName>
        <shortName>Spacrcan</shortName>
    </alternativeName>
</protein>
<comment type="function">
    <text evidence="8">Chondroitin sulfate- and hyaluronan-binding proteoglycan involved in the organization of interphotoreceptor matrix; may participate in the maturation and maintenance of the light-sensitive photoreceptor outer segment. Binds heparin.</text>
</comment>
<comment type="subcellular location">
    <subcellularLocation>
        <location evidence="14">Photoreceptor outer segment membrane</location>
        <topology evidence="3">Single-pass type I membrane protein</topology>
    </subcellularLocation>
    <subcellularLocation>
        <location evidence="2">Photoreceptor inner segment membrane</location>
        <topology evidence="3">Single-pass type I membrane protein</topology>
    </subcellularLocation>
    <subcellularLocation>
        <location evidence="8">Secreted</location>
        <location evidence="8">Extracellular space</location>
        <location evidence="8">Extracellular matrix</location>
        <location evidence="8">Interphotoreceptor matrix</location>
    </subcellularLocation>
</comment>
<comment type="tissue specificity">
    <text evidence="7 8 14">Expressed in the retina (at protein level) (PubMed:10702256, PubMed:29777959). Expressed by photoreceptors of the interphotoreceptor matrix (IPM) surrounding both rods and cones (at protein level) (PubMed:10542133, PubMed:29777959). IPM occupies the subretinal space between the apices of the retinal pigment epithelium and the neural retina (PubMed:10542133). Expressed in the pineal gland (at protein level) (PubMed:10702256).</text>
</comment>
<comment type="developmental stage">
    <text evidence="14">Expressed in the retina 17 weeks post-conception (at protein level) (PubMed:29777959). Expressed in the outer neuroblastic zone and retinal pigment epithelium (at protein level) (PubMed:29777959).</text>
</comment>
<comment type="PTM">
    <text evidence="8">Highly glycosylated (N- and O-linked carbohydrates).</text>
</comment>
<comment type="disease" evidence="10 11">
    <disease id="DI-02907">
        <name>Retinitis pigmentosa 56</name>
        <acronym>RP56</acronym>
        <description>A retinal dystrophy belonging to the group of pigmentary retinopathies. Retinitis pigmentosa is characterized by retinal pigment deposits visible on fundus examination and primary loss of rod photoreceptor cells followed by secondary loss of cone photoreceptors. Patients typically have night vision blindness and loss of midperipheral visual field. As their condition progresses, they lose their far peripheral visual field and eventually central vision as well.</description>
        <dbReference type="MIM" id="613581"/>
    </disease>
    <text>The disease is caused by variants affecting the gene represented in this entry.</text>
</comment>
<comment type="disease" evidence="10 12 13">
    <disease id="DI-04287">
        <name>Macular dystrophy, vitelliform, 5</name>
        <acronym>VMD5</acronym>
        <description>A form of macular dystrophy, a retinal disease in which various forms of deposits, pigmentary changes, and atrophic lesions are observed in the macula lutea. Vitelliform macular dystrophies are characterized by yellow, lipofuscin-containing deposits, usually localized at the center of the macula. VMD5 features include late-onset moderate visual impairment and preservation of retinal pigment epithelium reflectivity.</description>
        <dbReference type="MIM" id="616152"/>
    </disease>
    <text>The disease is caused by variants affecting the gene represented in this entry.</text>
</comment>
<organism>
    <name type="scientific">Homo sapiens</name>
    <name type="common">Human</name>
    <dbReference type="NCBI Taxonomy" id="9606"/>
    <lineage>
        <taxon>Eukaryota</taxon>
        <taxon>Metazoa</taxon>
        <taxon>Chordata</taxon>
        <taxon>Craniata</taxon>
        <taxon>Vertebrata</taxon>
        <taxon>Euteleostomi</taxon>
        <taxon>Mammalia</taxon>
        <taxon>Eutheria</taxon>
        <taxon>Euarchontoglires</taxon>
        <taxon>Primates</taxon>
        <taxon>Haplorrhini</taxon>
        <taxon>Catarrhini</taxon>
        <taxon>Hominidae</taxon>
        <taxon>Homo</taxon>
    </lineage>
</organism>
<reference key="1">
    <citation type="journal article" date="1999" name="Mol. Cell Biol. Res. Commun.">
        <title>Molecular characterization and genomic mapping of human IPM 200, a second member of a novel family of proteoglycans.</title>
        <authorList>
            <person name="Kuehn M.H."/>
            <person name="Hageman G.S."/>
        </authorList>
    </citation>
    <scope>NUCLEOTIDE SEQUENCE [GENOMIC DNA / MRNA]</scope>
    <scope>TISSUE SPECIFICITY</scope>
    <scope>VARIANT ILE-674</scope>
</reference>
<reference key="2">
    <citation type="journal article" date="2000" name="J. Biol. Chem.">
        <title>SPACRCAN, a novel human interphotoreceptor matrix hyaluronan-binding proteoglycan synthesized by photoreceptors and pinealocytes.</title>
        <authorList>
            <person name="Acharya S."/>
            <person name="Foletta V.C."/>
            <person name="Lee J.W."/>
            <person name="Rayborn M.E."/>
            <person name="Rodriguez I.R."/>
            <person name="Young W.S. III"/>
            <person name="Hollyfield J.G."/>
        </authorList>
    </citation>
    <scope>NUCLEOTIDE SEQUENCE [MRNA]</scope>
    <scope>PROTEIN SEQUENCE OF 82-86; 123-127 AND 582-593</scope>
    <scope>IDENTIFICATION BY MASS SPECTROMETRY</scope>
    <scope>FUNCTION</scope>
    <scope>SUBCELLULAR LOCATION</scope>
    <scope>TISSUE SPECIFICITY</scope>
    <scope>GLYCOSYLATION</scope>
    <scope>VARIANT ILE-674</scope>
</reference>
<reference key="3">
    <citation type="journal article" date="2006" name="Nature">
        <title>The DNA sequence, annotation and analysis of human chromosome 3.</title>
        <authorList>
            <person name="Muzny D.M."/>
            <person name="Scherer S.E."/>
            <person name="Kaul R."/>
            <person name="Wang J."/>
            <person name="Yu J."/>
            <person name="Sudbrak R."/>
            <person name="Buhay C.J."/>
            <person name="Chen R."/>
            <person name="Cree A."/>
            <person name="Ding Y."/>
            <person name="Dugan-Rocha S."/>
            <person name="Gill R."/>
            <person name="Gunaratne P."/>
            <person name="Harris R.A."/>
            <person name="Hawes A.C."/>
            <person name="Hernandez J."/>
            <person name="Hodgson A.V."/>
            <person name="Hume J."/>
            <person name="Jackson A."/>
            <person name="Khan Z.M."/>
            <person name="Kovar-Smith C."/>
            <person name="Lewis L.R."/>
            <person name="Lozado R.J."/>
            <person name="Metzker M.L."/>
            <person name="Milosavljevic A."/>
            <person name="Miner G.R."/>
            <person name="Morgan M.B."/>
            <person name="Nazareth L.V."/>
            <person name="Scott G."/>
            <person name="Sodergren E."/>
            <person name="Song X.-Z."/>
            <person name="Steffen D."/>
            <person name="Wei S."/>
            <person name="Wheeler D.A."/>
            <person name="Wright M.W."/>
            <person name="Worley K.C."/>
            <person name="Yuan Y."/>
            <person name="Zhang Z."/>
            <person name="Adams C.Q."/>
            <person name="Ansari-Lari M.A."/>
            <person name="Ayele M."/>
            <person name="Brown M.J."/>
            <person name="Chen G."/>
            <person name="Chen Z."/>
            <person name="Clendenning J."/>
            <person name="Clerc-Blankenburg K.P."/>
            <person name="Chen R."/>
            <person name="Chen Z."/>
            <person name="Davis C."/>
            <person name="Delgado O."/>
            <person name="Dinh H.H."/>
            <person name="Dong W."/>
            <person name="Draper H."/>
            <person name="Ernst S."/>
            <person name="Fu G."/>
            <person name="Gonzalez-Garay M.L."/>
            <person name="Garcia D.K."/>
            <person name="Gillett W."/>
            <person name="Gu J."/>
            <person name="Hao B."/>
            <person name="Haugen E."/>
            <person name="Havlak P."/>
            <person name="He X."/>
            <person name="Hennig S."/>
            <person name="Hu S."/>
            <person name="Huang W."/>
            <person name="Jackson L.R."/>
            <person name="Jacob L.S."/>
            <person name="Kelly S.H."/>
            <person name="Kube M."/>
            <person name="Levy R."/>
            <person name="Li Z."/>
            <person name="Liu B."/>
            <person name="Liu J."/>
            <person name="Liu W."/>
            <person name="Lu J."/>
            <person name="Maheshwari M."/>
            <person name="Nguyen B.-V."/>
            <person name="Okwuonu G.O."/>
            <person name="Palmeiri A."/>
            <person name="Pasternak S."/>
            <person name="Perez L.M."/>
            <person name="Phelps K.A."/>
            <person name="Plopper F.J."/>
            <person name="Qiang B."/>
            <person name="Raymond C."/>
            <person name="Rodriguez R."/>
            <person name="Saenphimmachak C."/>
            <person name="Santibanez J."/>
            <person name="Shen H."/>
            <person name="Shen Y."/>
            <person name="Subramanian S."/>
            <person name="Tabor P.E."/>
            <person name="Verduzco D."/>
            <person name="Waldron L."/>
            <person name="Wang J."/>
            <person name="Wang J."/>
            <person name="Wang Q."/>
            <person name="Williams G.A."/>
            <person name="Wong G.K.-S."/>
            <person name="Yao Z."/>
            <person name="Zhang J."/>
            <person name="Zhang X."/>
            <person name="Zhao G."/>
            <person name="Zhou J."/>
            <person name="Zhou Y."/>
            <person name="Nelson D."/>
            <person name="Lehrach H."/>
            <person name="Reinhardt R."/>
            <person name="Naylor S.L."/>
            <person name="Yang H."/>
            <person name="Olson M."/>
            <person name="Weinstock G."/>
            <person name="Gibbs R.A."/>
        </authorList>
    </citation>
    <scope>NUCLEOTIDE SEQUENCE [LARGE SCALE GENOMIC DNA]</scope>
</reference>
<reference key="4">
    <citation type="journal article" date="2018" name="Acta Biomater.">
        <title>Extracellular matrix component expression in human pluripotent stem cell-derived retinal organoids recapitulates retinogenesis in vivo and reveals an important role for IMPG1 and CD44 in the development of photoreceptors and interphotoreceptor matrix.</title>
        <authorList>
            <person name="Felemban M."/>
            <person name="Dorgau B."/>
            <person name="Hunt N.C."/>
            <person name="Hallam D."/>
            <person name="Zerti D."/>
            <person name="Bauer R."/>
            <person name="Ding Y."/>
            <person name="Collin J."/>
            <person name="Steel D."/>
            <person name="Krasnogor N."/>
            <person name="Al-Aama J."/>
            <person name="Lindsay S."/>
            <person name="Mellough C."/>
            <person name="Lako M."/>
        </authorList>
    </citation>
    <scope>SUBCELLULAR LOCATION</scope>
    <scope>TISSUE SPECIFICITY</scope>
    <scope>DEVELOPMENTAL STAGE</scope>
</reference>
<reference key="5">
    <citation type="journal article" date="2001" name="Invest. Ophthalmol. Vis. Sci.">
        <title>Organization of the human IMPG2 gene and its evaluation as a candidate gene in age-related macular degeneration and other retinal degenerative disorders.</title>
        <authorList>
            <person name="Kuehn M.H."/>
            <person name="Stone E.M."/>
            <person name="Hageman G.S."/>
        </authorList>
    </citation>
    <scope>VARIANTS ILE-674 AND LEU-1013</scope>
</reference>
<reference key="6">
    <citation type="journal article" date="2010" name="Am. J. Hum. Genet.">
        <title>Mutations in IMPG2, encoding interphotoreceptor matrix proteoglycan 2, cause autosomal-recessive retinitis pigmentosa.</title>
        <authorList>
            <person name="Bandah-Rozenfeld D."/>
            <person name="Collin R.W."/>
            <person name="Banin E."/>
            <person name="van den Born L.I."/>
            <person name="Coene K.L."/>
            <person name="Siemiatkowska A.M."/>
            <person name="Zelinger L."/>
            <person name="Khan M.I."/>
            <person name="Lefeber D.J."/>
            <person name="Erdinest I."/>
            <person name="Testa F."/>
            <person name="Simonelli F."/>
            <person name="Voesenek K."/>
            <person name="Blokland E.A."/>
            <person name="Strom T.M."/>
            <person name="Klaver C.C."/>
            <person name="Qamar R."/>
            <person name="Banfi S."/>
            <person name="Cremers F.P."/>
            <person name="Sharon D."/>
            <person name="den Hollander A.I."/>
        </authorList>
    </citation>
    <scope>INVOLVEMENT IN RP56</scope>
    <scope>INVOLVEMENT IN VMD5</scope>
    <scope>VARIANT VMD5 LEU-124</scope>
</reference>
<reference key="7">
    <citation type="journal article" date="2014" name="Invest. Ophthalmol. Vis. Sci.">
        <title>IMPG2-associated retinitis pigmentosa displays relatively early macular involvement.</title>
        <authorList>
            <person name="van Huet R.A."/>
            <person name="Collin R.W."/>
            <person name="Siemiatkowska A.M."/>
            <person name="Klaver C.C."/>
            <person name="Hoyng C.B."/>
            <person name="Simonelli F."/>
            <person name="Khan M.I."/>
            <person name="Qamar R."/>
            <person name="Banin E."/>
            <person name="Cremers F.P."/>
            <person name="Theelen T."/>
            <person name="den Hollander A.I."/>
            <person name="van den Born L.I."/>
            <person name="Klevering B.J."/>
        </authorList>
    </citation>
    <scope>VARIANTS RP56 127-ALA--VAL-1241 DEL; 171-LEU--VAL-1241 DEL; 212-SER--VAL-1241 DEL; 560-TYR--VAL-1241 DEL; 906-ARG--VAL-1241 DEL; 964-ARG--VAL-1241 DEL; 1008-ARG--VAL-1241 DEL AND 296-ARG--ASP-302 DEL</scope>
    <scope>VARIANT PRO-379</scope>
</reference>
<reference key="8">
    <citation type="journal article" date="2014" name="Ophthalmology">
        <title>Frequency and clinical pattern of vitelliform macular dystrophy caused by mutations of interphotoreceptor matrix IMPG1 and IMPG2 genes.</title>
        <authorList>
            <person name="Meunier I."/>
            <person name="Manes G."/>
            <person name="Bocquet B."/>
            <person name="Marquette V."/>
            <person name="Baudoin C."/>
            <person name="Puech B."/>
            <person name="Defoort-Dhellemmes S."/>
            <person name="Audo I."/>
            <person name="Verdet R."/>
            <person name="Arndt C."/>
            <person name="Zanlonghi X."/>
            <person name="Le Meur G."/>
            <person name="Dhaenens C.M."/>
            <person name="Hamel C.P."/>
        </authorList>
    </citation>
    <scope>INVOLVEMENT IN VMD5</scope>
    <scope>VARIANT VMD5 PHE-1077</scope>
</reference>
<reference key="9">
    <citation type="journal article" date="2017" name="Genes (Basel)">
        <title>Mutations in the Genes for Interphotoreceptor Matrix Proteoglycans, IMPG1 and IMPG2, in Patients with Vitelliform Macular Lesions.</title>
        <authorList>
            <person name="Brandl C."/>
            <person name="Schulz H.L."/>
            <person name="Charbel Issa P."/>
            <person name="Birtel J."/>
            <person name="Bergholz R."/>
            <person name="Lange C."/>
            <person name="Dahlke C."/>
            <person name="Zobor D."/>
            <person name="Weber B.H.F."/>
            <person name="Stoehr H."/>
        </authorList>
    </citation>
    <scope>VARIANTS VMD5 226-GLU--VAL-1241 DEL; 522-SER--VAL-1241 DEL; 856-GLN--VAL-1241 DEL AND PHE-1077</scope>
    <scope>VARIANTS PRO-243; ASP-1008; SER-1016 AND CYS-1042</scope>
</reference>
<dbReference type="EMBL" id="AF173155">
    <property type="protein sequence ID" value="AAF06999.1"/>
    <property type="molecule type" value="mRNA"/>
</dbReference>
<dbReference type="EMBL" id="AF271379">
    <property type="protein sequence ID" value="AAG49889.1"/>
    <property type="molecule type" value="Genomic_DNA"/>
</dbReference>
<dbReference type="EMBL" id="AF271363">
    <property type="protein sequence ID" value="AAG49889.1"/>
    <property type="status" value="JOINED"/>
    <property type="molecule type" value="Genomic_DNA"/>
</dbReference>
<dbReference type="EMBL" id="AF271364">
    <property type="protein sequence ID" value="AAG49889.1"/>
    <property type="status" value="JOINED"/>
    <property type="molecule type" value="Genomic_DNA"/>
</dbReference>
<dbReference type="EMBL" id="AF271365">
    <property type="protein sequence ID" value="AAG49889.1"/>
    <property type="status" value="JOINED"/>
    <property type="molecule type" value="Genomic_DNA"/>
</dbReference>
<dbReference type="EMBL" id="AF271366">
    <property type="protein sequence ID" value="AAG49889.1"/>
    <property type="status" value="JOINED"/>
    <property type="molecule type" value="Genomic_DNA"/>
</dbReference>
<dbReference type="EMBL" id="AF271367">
    <property type="protein sequence ID" value="AAG49889.1"/>
    <property type="status" value="JOINED"/>
    <property type="molecule type" value="Genomic_DNA"/>
</dbReference>
<dbReference type="EMBL" id="AF271368">
    <property type="protein sequence ID" value="AAG49889.1"/>
    <property type="status" value="JOINED"/>
    <property type="molecule type" value="Genomic_DNA"/>
</dbReference>
<dbReference type="EMBL" id="AF271369">
    <property type="protein sequence ID" value="AAG49889.1"/>
    <property type="status" value="JOINED"/>
    <property type="molecule type" value="Genomic_DNA"/>
</dbReference>
<dbReference type="EMBL" id="AF271370">
    <property type="protein sequence ID" value="AAG49889.1"/>
    <property type="status" value="JOINED"/>
    <property type="molecule type" value="Genomic_DNA"/>
</dbReference>
<dbReference type="EMBL" id="AF271371">
    <property type="protein sequence ID" value="AAG49889.1"/>
    <property type="status" value="JOINED"/>
    <property type="molecule type" value="Genomic_DNA"/>
</dbReference>
<dbReference type="EMBL" id="AF271372">
    <property type="protein sequence ID" value="AAG49889.1"/>
    <property type="status" value="JOINED"/>
    <property type="molecule type" value="Genomic_DNA"/>
</dbReference>
<dbReference type="EMBL" id="AF271373">
    <property type="protein sequence ID" value="AAG49889.1"/>
    <property type="status" value="JOINED"/>
    <property type="molecule type" value="Genomic_DNA"/>
</dbReference>
<dbReference type="EMBL" id="AF271374">
    <property type="protein sequence ID" value="AAG49889.1"/>
    <property type="status" value="JOINED"/>
    <property type="molecule type" value="Genomic_DNA"/>
</dbReference>
<dbReference type="EMBL" id="AF271375">
    <property type="protein sequence ID" value="AAG49889.1"/>
    <property type="status" value="JOINED"/>
    <property type="molecule type" value="Genomic_DNA"/>
</dbReference>
<dbReference type="EMBL" id="AF271376">
    <property type="protein sequence ID" value="AAG49889.1"/>
    <property type="status" value="JOINED"/>
    <property type="molecule type" value="Genomic_DNA"/>
</dbReference>
<dbReference type="EMBL" id="AF271377">
    <property type="protein sequence ID" value="AAG49889.1"/>
    <property type="status" value="JOINED"/>
    <property type="molecule type" value="Genomic_DNA"/>
</dbReference>
<dbReference type="EMBL" id="AF271378">
    <property type="protein sequence ID" value="AAG49889.1"/>
    <property type="status" value="JOINED"/>
    <property type="molecule type" value="Genomic_DNA"/>
</dbReference>
<dbReference type="EMBL" id="AF157624">
    <property type="protein sequence ID" value="AAF13154.1"/>
    <property type="molecule type" value="mRNA"/>
</dbReference>
<dbReference type="EMBL" id="AC068764">
    <property type="status" value="NOT_ANNOTATED_CDS"/>
    <property type="molecule type" value="Genomic_DNA"/>
</dbReference>
<dbReference type="CCDS" id="CCDS2940.1"/>
<dbReference type="RefSeq" id="NP_057331.2">
    <property type="nucleotide sequence ID" value="NM_016247.4"/>
</dbReference>
<dbReference type="STRING" id="9606.ENSP00000193391"/>
<dbReference type="DrugBank" id="DB08818">
    <property type="generic name" value="Hyaluronic acid"/>
</dbReference>
<dbReference type="GlyCosmos" id="Q9BZV3">
    <property type="glycosylation" value="10 sites, No reported glycans"/>
</dbReference>
<dbReference type="GlyGen" id="Q9BZV3">
    <property type="glycosylation" value="11 sites"/>
</dbReference>
<dbReference type="iPTMnet" id="Q9BZV3"/>
<dbReference type="PhosphoSitePlus" id="Q9BZV3"/>
<dbReference type="BioMuta" id="IMPG2"/>
<dbReference type="DMDM" id="296439325"/>
<dbReference type="jPOST" id="Q9BZV3"/>
<dbReference type="MassIVE" id="Q9BZV3"/>
<dbReference type="PaxDb" id="9606-ENSP00000193391"/>
<dbReference type="PeptideAtlas" id="Q9BZV3"/>
<dbReference type="ProteomicsDB" id="79907"/>
<dbReference type="Antibodypedia" id="32271">
    <property type="antibodies" value="44 antibodies from 20 providers"/>
</dbReference>
<dbReference type="DNASU" id="50939"/>
<dbReference type="Ensembl" id="ENST00000193391.8">
    <property type="protein sequence ID" value="ENSP00000193391.6"/>
    <property type="gene ID" value="ENSG00000081148.12"/>
</dbReference>
<dbReference type="GeneID" id="50939"/>
<dbReference type="KEGG" id="hsa:50939"/>
<dbReference type="MANE-Select" id="ENST00000193391.8">
    <property type="protein sequence ID" value="ENSP00000193391.6"/>
    <property type="RefSeq nucleotide sequence ID" value="NM_016247.4"/>
    <property type="RefSeq protein sequence ID" value="NP_057331.2"/>
</dbReference>
<dbReference type="UCSC" id="uc003duq.3">
    <property type="organism name" value="human"/>
</dbReference>
<dbReference type="AGR" id="HGNC:18362"/>
<dbReference type="CTD" id="50939"/>
<dbReference type="DisGeNET" id="50939"/>
<dbReference type="GeneCards" id="IMPG2"/>
<dbReference type="GeneReviews" id="IMPG2"/>
<dbReference type="HGNC" id="HGNC:18362">
    <property type="gene designation" value="IMPG2"/>
</dbReference>
<dbReference type="HPA" id="ENSG00000081148">
    <property type="expression patterns" value="Tissue enriched (retina)"/>
</dbReference>
<dbReference type="MalaCards" id="IMPG2"/>
<dbReference type="MIM" id="607056">
    <property type="type" value="gene"/>
</dbReference>
<dbReference type="MIM" id="613581">
    <property type="type" value="phenotype"/>
</dbReference>
<dbReference type="MIM" id="616152">
    <property type="type" value="phenotype"/>
</dbReference>
<dbReference type="neXtProt" id="NX_Q9BZV3"/>
<dbReference type="OpenTargets" id="ENSG00000081148"/>
<dbReference type="Orphanet" id="99000">
    <property type="disease" value="Adult-onset foveomacular vitelliform dystrophy"/>
</dbReference>
<dbReference type="Orphanet" id="791">
    <property type="disease" value="Retinitis pigmentosa"/>
</dbReference>
<dbReference type="PharmGKB" id="PA29866"/>
<dbReference type="VEuPathDB" id="HostDB:ENSG00000081148"/>
<dbReference type="eggNOG" id="ENOG502QT6W">
    <property type="taxonomic scope" value="Eukaryota"/>
</dbReference>
<dbReference type="GeneTree" id="ENSGT00530000063503"/>
<dbReference type="HOGENOM" id="CLU_005111_0_0_1"/>
<dbReference type="InParanoid" id="Q9BZV3"/>
<dbReference type="OMA" id="ESSIWPW"/>
<dbReference type="OrthoDB" id="8960773at2759"/>
<dbReference type="PAN-GO" id="Q9BZV3">
    <property type="GO annotations" value="2 GO annotations based on evolutionary models"/>
</dbReference>
<dbReference type="PhylomeDB" id="Q9BZV3"/>
<dbReference type="TreeFam" id="TF331340"/>
<dbReference type="PathwayCommons" id="Q9BZV3"/>
<dbReference type="BioGRID-ORCS" id="50939">
    <property type="hits" value="9 hits in 1146 CRISPR screens"/>
</dbReference>
<dbReference type="ChiTaRS" id="IMPG2">
    <property type="organism name" value="human"/>
</dbReference>
<dbReference type="GenomeRNAi" id="50939"/>
<dbReference type="Pharos" id="Q9BZV3">
    <property type="development level" value="Tbio"/>
</dbReference>
<dbReference type="PRO" id="PR:Q9BZV3"/>
<dbReference type="Proteomes" id="UP000005640">
    <property type="component" value="Chromosome 3"/>
</dbReference>
<dbReference type="RNAct" id="Q9BZV3">
    <property type="molecule type" value="protein"/>
</dbReference>
<dbReference type="Bgee" id="ENSG00000081148">
    <property type="expression patterns" value="Expressed in right uterine tube and 63 other cell types or tissues"/>
</dbReference>
<dbReference type="ExpressionAtlas" id="Q9BZV3">
    <property type="expression patterns" value="baseline and differential"/>
</dbReference>
<dbReference type="GO" id="GO:0042995">
    <property type="term" value="C:cell projection"/>
    <property type="evidence" value="ECO:0007669"/>
    <property type="project" value="UniProtKB-KW"/>
</dbReference>
<dbReference type="GO" id="GO:0031012">
    <property type="term" value="C:extracellular matrix"/>
    <property type="evidence" value="ECO:0000304"/>
    <property type="project" value="UniProtKB"/>
</dbReference>
<dbReference type="GO" id="GO:0005576">
    <property type="term" value="C:extracellular region"/>
    <property type="evidence" value="ECO:0007669"/>
    <property type="project" value="UniProtKB-KW"/>
</dbReference>
<dbReference type="GO" id="GO:0033165">
    <property type="term" value="C:interphotoreceptor matrix"/>
    <property type="evidence" value="ECO:0007669"/>
    <property type="project" value="UniProtKB-SubCell"/>
</dbReference>
<dbReference type="GO" id="GO:0016020">
    <property type="term" value="C:membrane"/>
    <property type="evidence" value="ECO:0007669"/>
    <property type="project" value="UniProtKB-KW"/>
</dbReference>
<dbReference type="GO" id="GO:0043235">
    <property type="term" value="C:receptor complex"/>
    <property type="evidence" value="ECO:0000314"/>
    <property type="project" value="MGI"/>
</dbReference>
<dbReference type="GO" id="GO:0005201">
    <property type="term" value="F:extracellular matrix structural constituent"/>
    <property type="evidence" value="ECO:0000304"/>
    <property type="project" value="UniProtKB"/>
</dbReference>
<dbReference type="GO" id="GO:0008201">
    <property type="term" value="F:heparin binding"/>
    <property type="evidence" value="ECO:0000318"/>
    <property type="project" value="GO_Central"/>
</dbReference>
<dbReference type="GO" id="GO:0005540">
    <property type="term" value="F:hyaluronic acid binding"/>
    <property type="evidence" value="ECO:0000318"/>
    <property type="project" value="GO_Central"/>
</dbReference>
<dbReference type="GO" id="GO:0030198">
    <property type="term" value="P:extracellular matrix organization"/>
    <property type="evidence" value="ECO:0007669"/>
    <property type="project" value="Ensembl"/>
</dbReference>
<dbReference type="GO" id="GO:0008104">
    <property type="term" value="P:protein localization"/>
    <property type="evidence" value="ECO:0007669"/>
    <property type="project" value="Ensembl"/>
</dbReference>
<dbReference type="GO" id="GO:0060042">
    <property type="term" value="P:retina morphogenesis in camera-type eye"/>
    <property type="evidence" value="ECO:0007669"/>
    <property type="project" value="Ensembl"/>
</dbReference>
<dbReference type="GO" id="GO:0007601">
    <property type="term" value="P:visual perception"/>
    <property type="evidence" value="ECO:0000304"/>
    <property type="project" value="UniProtKB"/>
</dbReference>
<dbReference type="FunFam" id="3.30.70.960:FF:000002">
    <property type="entry name" value="Interphotoreceptor matrix proteoglycan 2"/>
    <property type="match status" value="1"/>
</dbReference>
<dbReference type="Gene3D" id="3.30.70.960">
    <property type="entry name" value="SEA domain"/>
    <property type="match status" value="1"/>
</dbReference>
<dbReference type="InterPro" id="IPR000742">
    <property type="entry name" value="EGF-like_dom"/>
</dbReference>
<dbReference type="InterPro" id="IPR039861">
    <property type="entry name" value="IMPG"/>
</dbReference>
<dbReference type="InterPro" id="IPR000082">
    <property type="entry name" value="SEA_dom"/>
</dbReference>
<dbReference type="InterPro" id="IPR036364">
    <property type="entry name" value="SEA_dom_sf"/>
</dbReference>
<dbReference type="PANTHER" id="PTHR12199">
    <property type="entry name" value="INTERPHOTORECEPTOR MATRIX PROTEOGLYCAN"/>
    <property type="match status" value="1"/>
</dbReference>
<dbReference type="PANTHER" id="PTHR12199:SF4">
    <property type="entry name" value="INTERPHOTORECEPTOR MATRIX PROTEOGLYCAN 2"/>
    <property type="match status" value="1"/>
</dbReference>
<dbReference type="Pfam" id="PF01390">
    <property type="entry name" value="SEA"/>
    <property type="match status" value="2"/>
</dbReference>
<dbReference type="SMART" id="SM00200">
    <property type="entry name" value="SEA"/>
    <property type="match status" value="2"/>
</dbReference>
<dbReference type="SUPFAM" id="SSF82671">
    <property type="entry name" value="SEA domain"/>
    <property type="match status" value="2"/>
</dbReference>
<dbReference type="PROSITE" id="PS01186">
    <property type="entry name" value="EGF_2"/>
    <property type="match status" value="1"/>
</dbReference>
<dbReference type="PROSITE" id="PS50026">
    <property type="entry name" value="EGF_3"/>
    <property type="match status" value="2"/>
</dbReference>
<dbReference type="PROSITE" id="PS50024">
    <property type="entry name" value="SEA"/>
    <property type="match status" value="2"/>
</dbReference>
<accession>Q9BZV3</accession>
<accession>A8MWT5</accession>
<accession>Q9UKD4</accession>
<accession>Q9UKK5</accession>
<proteinExistence type="evidence at protein level"/>
<feature type="signal peptide" evidence="3">
    <location>
        <begin position="1"/>
        <end position="22"/>
    </location>
</feature>
<feature type="chain" id="PRO_0000320149" description="Interphotoreceptor matrix proteoglycan 2">
    <location>
        <begin position="23"/>
        <end position="1241"/>
    </location>
</feature>
<feature type="topological domain" description="Extracellular" evidence="3">
    <location>
        <begin position="23"/>
        <end position="1099"/>
    </location>
</feature>
<feature type="transmembrane region" description="Helical" evidence="3">
    <location>
        <begin position="1100"/>
        <end position="1120"/>
    </location>
</feature>
<feature type="topological domain" description="Cytoplasmic" evidence="3">
    <location>
        <begin position="1121"/>
        <end position="1241"/>
    </location>
</feature>
<feature type="domain" description="SEA 1" evidence="5">
    <location>
        <begin position="239"/>
        <end position="353"/>
    </location>
</feature>
<feature type="domain" description="SEA 2" evidence="5">
    <location>
        <begin position="897"/>
        <end position="1010"/>
    </location>
</feature>
<feature type="domain" description="EGF-like 1" evidence="4">
    <location>
        <begin position="1010"/>
        <end position="1051"/>
    </location>
</feature>
<feature type="domain" description="EGF-like 2" evidence="4">
    <location>
        <begin position="1052"/>
        <end position="1093"/>
    </location>
</feature>
<feature type="region of interest" description="Disordered" evidence="6">
    <location>
        <begin position="180"/>
        <end position="223"/>
    </location>
</feature>
<feature type="region of interest" description="Hyaluronan-binding motif involved in chondroitin sulfate A-binding" evidence="1">
    <location>
        <begin position="259"/>
        <end position="267"/>
    </location>
</feature>
<feature type="region of interest" description="Disordered" evidence="6">
    <location>
        <begin position="660"/>
        <end position="684"/>
    </location>
</feature>
<feature type="region of interest" description="Hyaluronan-binding motif involved in chondroitin sulfate C-binding" evidence="1">
    <location>
        <begin position="1080"/>
        <end position="1088"/>
    </location>
</feature>
<feature type="region of interest" description="Hyaluronan-binding motif involved in chondroitin sulfate A- and C-binding" evidence="1">
    <location>
        <begin position="1125"/>
        <end position="1133"/>
    </location>
</feature>
<feature type="region of interest" description="Hyaluronan-binding motif involved in chondroitin sulfate C-binding" evidence="1">
    <location>
        <begin position="1136"/>
        <end position="1145"/>
    </location>
</feature>
<feature type="region of interest" description="Hyaluronan-binding motif involved in chondroitin sulfate A- and C-binding motif" evidence="1">
    <location>
        <begin position="1210"/>
        <end position="1218"/>
    </location>
</feature>
<feature type="compositionally biased region" description="Polar residues" evidence="6">
    <location>
        <begin position="189"/>
        <end position="199"/>
    </location>
</feature>
<feature type="compositionally biased region" description="Basic and acidic residues" evidence="6">
    <location>
        <begin position="660"/>
        <end position="678"/>
    </location>
</feature>
<feature type="glycosylation site" description="N-linked (GlcNAc...) asparagine" evidence="3">
    <location>
        <position position="154"/>
    </location>
</feature>
<feature type="glycosylation site" description="O-linked (GalNAc...) threonine" evidence="3">
    <location>
        <position position="190"/>
    </location>
</feature>
<feature type="glycosylation site" description="O-linked (GalNAc...) threonine" evidence="3">
    <location>
        <position position="192"/>
    </location>
</feature>
<feature type="glycosylation site" description="N-linked (GlcNAc...) asparagine" evidence="3">
    <location>
        <position position="301"/>
    </location>
</feature>
<feature type="glycosylation site" description="N-linked (GlcNAc...) asparagine" evidence="3">
    <location>
        <position position="320"/>
    </location>
</feature>
<feature type="glycosylation site" description="N-linked (GlcNAc...) asparagine" evidence="3">
    <location>
        <position position="370"/>
    </location>
</feature>
<feature type="glycosylation site" description="O-linked (GalNAc...) threonine" evidence="3">
    <location>
        <position position="544"/>
    </location>
</feature>
<feature type="glycosylation site" description="O-linked (GalNAc...) threonine" evidence="3">
    <location>
        <position position="556"/>
    </location>
</feature>
<feature type="glycosylation site" description="N-linked (GlcNAc...) asparagine" evidence="3">
    <location>
        <position position="942"/>
    </location>
</feature>
<feature type="glycosylation site" description="N-linked (GlcNAc...) asparagine" evidence="3">
    <location>
        <position position="956"/>
    </location>
</feature>
<feature type="disulfide bond" evidence="4">
    <location>
        <begin position="1014"/>
        <end position="1025"/>
    </location>
</feature>
<feature type="disulfide bond" evidence="4">
    <location>
        <begin position="1019"/>
        <end position="1036"/>
    </location>
</feature>
<feature type="disulfide bond" evidence="4">
    <location>
        <begin position="1038"/>
        <end position="1050"/>
    </location>
</feature>
<feature type="disulfide bond" evidence="4">
    <location>
        <begin position="1054"/>
        <end position="1067"/>
    </location>
</feature>
<feature type="disulfide bond" evidence="4">
    <location>
        <begin position="1061"/>
        <end position="1077"/>
    </location>
</feature>
<feature type="disulfide bond" evidence="4">
    <location>
        <begin position="1079"/>
        <end position="1092"/>
    </location>
</feature>
<feature type="sequence variant" id="VAR_064336" description="In VMD5; dbSNP:rs201893545." evidence="10">
    <original>F</original>
    <variation>L</variation>
    <location>
        <position position="124"/>
    </location>
</feature>
<feature type="sequence variant" id="VAR_082176" description="In RP56." evidence="11">
    <location>
        <begin position="127"/>
        <end position="1241"/>
    </location>
</feature>
<feature type="sequence variant" id="VAR_082177" description="In RP56." evidence="11">
    <location>
        <begin position="171"/>
        <end position="1241"/>
    </location>
</feature>
<feature type="sequence variant" id="VAR_082178" description="In RP56." evidence="11">
    <location>
        <begin position="212"/>
        <end position="1241"/>
    </location>
</feature>
<feature type="sequence variant" id="VAR_082179" description="In VMD5." evidence="13">
    <location>
        <begin position="226"/>
        <end position="1241"/>
    </location>
</feature>
<feature type="sequence variant" id="VAR_082180" description="Found in a patient with vitelliform macular dystrophy; uncertain significance; dbSNP:rs1706811719." evidence="13">
    <original>A</original>
    <variation>P</variation>
    <location>
        <position position="243"/>
    </location>
</feature>
<feature type="sequence variant" id="VAR_082181" description="In RP56." evidence="11">
    <location>
        <begin position="296"/>
        <end position="302"/>
    </location>
</feature>
<feature type="sequence variant" id="VAR_039144" description="In dbSNP:rs34375459.">
    <original>K</original>
    <variation>N</variation>
    <location>
        <position position="344"/>
    </location>
</feature>
<feature type="sequence variant" id="VAR_082182" description="Found in a patient with retinitis pigmentosa; uncertain significance." evidence="11">
    <original>S</original>
    <variation>P</variation>
    <location>
        <position position="379"/>
    </location>
</feature>
<feature type="sequence variant" id="VAR_082183" description="In VMD5." evidence="13">
    <location>
        <begin position="522"/>
        <end position="1241"/>
    </location>
</feature>
<feature type="sequence variant" id="VAR_082184" description="In RP56." evidence="11">
    <location>
        <begin position="560"/>
        <end position="1241"/>
    </location>
</feature>
<feature type="sequence variant" id="VAR_039145" description="In dbSNP:rs571391." evidence="7 8 9">
    <original>T</original>
    <variation>I</variation>
    <location>
        <position position="674"/>
    </location>
</feature>
<feature type="sequence variant" id="VAR_082185" description="In VMD5." evidence="13">
    <location>
        <begin position="856"/>
        <end position="1241"/>
    </location>
</feature>
<feature type="sequence variant" id="VAR_082186" description="In RP56." evidence="11">
    <location>
        <begin position="906"/>
        <end position="1241"/>
    </location>
</feature>
<feature type="sequence variant" id="VAR_082187" description="In RP56." evidence="11">
    <location>
        <begin position="964"/>
        <end position="1241"/>
    </location>
</feature>
<feature type="sequence variant" id="VAR_082188" description="Found in a patient with vitelliform macular dystrophy; uncertain significance; dbSNP:rs768975120." evidence="13">
    <original>G</original>
    <variation>D</variation>
    <location>
        <position position="1008"/>
    </location>
</feature>
<feature type="sequence variant" id="VAR_039146" description="In dbSNP:rs116450347." evidence="9">
    <original>P</original>
    <variation>L</variation>
    <location>
        <position position="1013"/>
    </location>
</feature>
<feature type="sequence variant" id="VAR_082189" description="Found in a patient with VMD5; uncertain significance." evidence="13">
    <original>F</original>
    <variation>S</variation>
    <location>
        <position position="1016"/>
    </location>
</feature>
<feature type="sequence variant" id="VAR_082190" description="Found in a patient with vitelliform macular dystophy; uncertain significance; dbSNP:rs990633116." evidence="13">
    <original>Y</original>
    <variation>C</variation>
    <location>
        <position position="1042"/>
    </location>
</feature>
<feature type="sequence variant" id="VAR_072671" description="In VMD5; dbSNP:rs713993049." evidence="12 13">
    <original>C</original>
    <variation>F</variation>
    <location>
        <position position="1077"/>
    </location>
</feature>
<feature type="sequence variant" id="VAR_082191" description="In RP56." evidence="11">
    <location>
        <begin position="1088"/>
        <end position="1241"/>
    </location>
</feature>
<feature type="sequence conflict" description="In Ref. 2; AAF13154." evidence="15" ref="2">
    <original>P</original>
    <variation>L</variation>
    <location>
        <position position="5"/>
    </location>
</feature>
<feature type="sequence conflict" description="In Ref. 2; AAF13154." evidence="15" ref="2">
    <original>I</original>
    <variation>T</variation>
    <location>
        <position position="77"/>
    </location>
</feature>
<feature type="sequence conflict" description="In Ref. 2; AAF13154." evidence="15" ref="2">
    <original>E</original>
    <variation>V</variation>
    <location>
        <position position="668"/>
    </location>
</feature>
<feature type="sequence conflict" description="In Ref. 1; AAF06999." evidence="15" ref="1">
    <original>Y</original>
    <variation>C</variation>
    <location>
        <position position="715"/>
    </location>
</feature>
<feature type="sequence conflict" description="In Ref. 1; AAG49889." evidence="15" ref="1">
    <original>N</original>
    <variation>T</variation>
    <location>
        <position position="1012"/>
    </location>
</feature>